<dbReference type="EMBL" id="AF416722">
    <property type="protein sequence ID" value="AAL11542.1"/>
    <property type="status" value="ALT_FRAME"/>
    <property type="molecule type" value="mRNA"/>
</dbReference>
<dbReference type="EMBL" id="AF493788">
    <property type="protein sequence ID" value="AAM14593.1"/>
    <property type="molecule type" value="Genomic_DNA"/>
</dbReference>
<dbReference type="EMBL" id="AF493789">
    <property type="protein sequence ID" value="AAM14594.1"/>
    <property type="molecule type" value="mRNA"/>
</dbReference>
<dbReference type="EMBL" id="CR855027">
    <property type="protein sequence ID" value="CAH65897.1"/>
    <property type="molecule type" value="Genomic_DNA"/>
</dbReference>
<dbReference type="SMR" id="Q01MW8"/>
<dbReference type="TCDB" id="2.A.1.9.4">
    <property type="family name" value="the major facilitator superfamily (mfs)"/>
</dbReference>
<dbReference type="EnsemblPlants" id="BGIOSGA015518-TA">
    <property type="protein sequence ID" value="BGIOSGA015518-PA"/>
    <property type="gene ID" value="BGIOSGA015518"/>
</dbReference>
<dbReference type="EnsemblPlants" id="OsGoSa_04g0003440.01">
    <property type="protein sequence ID" value="OsGoSa_04g0003440.01"/>
    <property type="gene ID" value="OsGoSa_04g0003440"/>
</dbReference>
<dbReference type="EnsemblPlants" id="OsGoSa_04g0003440.02">
    <property type="protein sequence ID" value="OsGoSa_04g0003440.02"/>
    <property type="gene ID" value="OsGoSa_04g0003440"/>
</dbReference>
<dbReference type="EnsemblPlants" id="OsGoSa_04g0003440.03">
    <property type="protein sequence ID" value="OsGoSa_04g0003440.03"/>
    <property type="gene ID" value="OsGoSa_04g0003440"/>
</dbReference>
<dbReference type="EnsemblPlants" id="OsIR64_04g0003550.01">
    <property type="protein sequence ID" value="OsIR64_04g0003550.01"/>
    <property type="gene ID" value="OsIR64_04g0003550"/>
</dbReference>
<dbReference type="EnsemblPlants" id="OsIR64_04g0003550.02">
    <property type="protein sequence ID" value="OsIR64_04g0003550.02"/>
    <property type="gene ID" value="OsIR64_04g0003550"/>
</dbReference>
<dbReference type="EnsemblPlants" id="OsIR64_04g0003550.03">
    <property type="protein sequence ID" value="OsIR64_04g0003550.03"/>
    <property type="gene ID" value="OsIR64_04g0003550"/>
</dbReference>
<dbReference type="EnsemblPlants" id="OsKYG_04g0003640.01">
    <property type="protein sequence ID" value="OsKYG_04g0003640.01"/>
    <property type="gene ID" value="OsKYG_04g0003640"/>
</dbReference>
<dbReference type="EnsemblPlants" id="OsKYG_04g0003640.02">
    <property type="protein sequence ID" value="OsKYG_04g0003640.02"/>
    <property type="gene ID" value="OsKYG_04g0003640"/>
</dbReference>
<dbReference type="EnsemblPlants" id="OsKYG_04g0003640.03">
    <property type="protein sequence ID" value="OsKYG_04g0003640.03"/>
    <property type="gene ID" value="OsKYG_04g0003640"/>
</dbReference>
<dbReference type="EnsemblPlants" id="OsKYG_04g0003640.04">
    <property type="protein sequence ID" value="OsKYG_04g0003640.04"/>
    <property type="gene ID" value="OsKYG_04g0003640"/>
</dbReference>
<dbReference type="EnsemblPlants" id="OsLima_04g0003400.01">
    <property type="protein sequence ID" value="OsLima_04g0003400.01"/>
    <property type="gene ID" value="OsLima_04g0003400"/>
</dbReference>
<dbReference type="EnsemblPlants" id="OsLima_04g0003400.02">
    <property type="protein sequence ID" value="OsLima_04g0003400.02"/>
    <property type="gene ID" value="OsLima_04g0003400"/>
</dbReference>
<dbReference type="EnsemblPlants" id="OsLima_04g0003400.03">
    <property type="protein sequence ID" value="OsLima_04g0003400.03"/>
    <property type="gene ID" value="OsLima_04g0003400"/>
</dbReference>
<dbReference type="EnsemblPlants" id="OsLima_04g0003400.04">
    <property type="protein sequence ID" value="OsLima_04g0003400.04"/>
    <property type="gene ID" value="OsLima_04g0003400"/>
</dbReference>
<dbReference type="EnsemblPlants" id="OsLiXu_04g0003340.01">
    <property type="protein sequence ID" value="OsLiXu_04g0003340.01"/>
    <property type="gene ID" value="OsLiXu_04g0003340"/>
</dbReference>
<dbReference type="EnsemblPlants" id="OsPr106_04g0003490.01">
    <property type="protein sequence ID" value="OsPr106_04g0003490.01"/>
    <property type="gene ID" value="OsPr106_04g0003490"/>
</dbReference>
<dbReference type="EnsemblPlants" id="OsPr106_04g0003490.02">
    <property type="protein sequence ID" value="OsPr106_04g0003490.02"/>
    <property type="gene ID" value="OsPr106_04g0003490"/>
</dbReference>
<dbReference type="EnsemblPlants" id="OsPr106_04g0003490.03">
    <property type="protein sequence ID" value="OsPr106_04g0003490.03"/>
    <property type="gene ID" value="OsPr106_04g0003490"/>
</dbReference>
<dbReference type="Gramene" id="BGIOSGA015518-TA">
    <property type="protein sequence ID" value="BGIOSGA015518-PA"/>
    <property type="gene ID" value="BGIOSGA015518"/>
</dbReference>
<dbReference type="Gramene" id="OsGoSa_04g0003440.01">
    <property type="protein sequence ID" value="OsGoSa_04g0003440.01"/>
    <property type="gene ID" value="OsGoSa_04g0003440"/>
</dbReference>
<dbReference type="Gramene" id="OsGoSa_04g0003440.02">
    <property type="protein sequence ID" value="OsGoSa_04g0003440.02"/>
    <property type="gene ID" value="OsGoSa_04g0003440"/>
</dbReference>
<dbReference type="Gramene" id="OsGoSa_04g0003440.03">
    <property type="protein sequence ID" value="OsGoSa_04g0003440.03"/>
    <property type="gene ID" value="OsGoSa_04g0003440"/>
</dbReference>
<dbReference type="Gramene" id="OsIR64_04g0003550.01">
    <property type="protein sequence ID" value="OsIR64_04g0003550.01"/>
    <property type="gene ID" value="OsIR64_04g0003550"/>
</dbReference>
<dbReference type="Gramene" id="OsIR64_04g0003550.02">
    <property type="protein sequence ID" value="OsIR64_04g0003550.02"/>
    <property type="gene ID" value="OsIR64_04g0003550"/>
</dbReference>
<dbReference type="Gramene" id="OsIR64_04g0003550.03">
    <property type="protein sequence ID" value="OsIR64_04g0003550.03"/>
    <property type="gene ID" value="OsIR64_04g0003550"/>
</dbReference>
<dbReference type="Gramene" id="OsKYG_04g0003640.01">
    <property type="protein sequence ID" value="OsKYG_04g0003640.01"/>
    <property type="gene ID" value="OsKYG_04g0003640"/>
</dbReference>
<dbReference type="Gramene" id="OsKYG_04g0003640.02">
    <property type="protein sequence ID" value="OsKYG_04g0003640.02"/>
    <property type="gene ID" value="OsKYG_04g0003640"/>
</dbReference>
<dbReference type="Gramene" id="OsKYG_04g0003640.03">
    <property type="protein sequence ID" value="OsKYG_04g0003640.03"/>
    <property type="gene ID" value="OsKYG_04g0003640"/>
</dbReference>
<dbReference type="Gramene" id="OsKYG_04g0003640.04">
    <property type="protein sequence ID" value="OsKYG_04g0003640.04"/>
    <property type="gene ID" value="OsKYG_04g0003640"/>
</dbReference>
<dbReference type="Gramene" id="OsLima_04g0003400.01">
    <property type="protein sequence ID" value="OsLima_04g0003400.01"/>
    <property type="gene ID" value="OsLima_04g0003400"/>
</dbReference>
<dbReference type="Gramene" id="OsLima_04g0003400.02">
    <property type="protein sequence ID" value="OsLima_04g0003400.02"/>
    <property type="gene ID" value="OsLima_04g0003400"/>
</dbReference>
<dbReference type="Gramene" id="OsLima_04g0003400.03">
    <property type="protein sequence ID" value="OsLima_04g0003400.03"/>
    <property type="gene ID" value="OsLima_04g0003400"/>
</dbReference>
<dbReference type="Gramene" id="OsLima_04g0003400.04">
    <property type="protein sequence ID" value="OsLima_04g0003400.04"/>
    <property type="gene ID" value="OsLima_04g0003400"/>
</dbReference>
<dbReference type="Gramene" id="OsLiXu_04g0003340.01">
    <property type="protein sequence ID" value="OsLiXu_04g0003340.01"/>
    <property type="gene ID" value="OsLiXu_04g0003340"/>
</dbReference>
<dbReference type="Gramene" id="OsPr106_04g0003490.01">
    <property type="protein sequence ID" value="OsPr106_04g0003490.01"/>
    <property type="gene ID" value="OsPr106_04g0003490"/>
</dbReference>
<dbReference type="Gramene" id="OsPr106_04g0003490.02">
    <property type="protein sequence ID" value="OsPr106_04g0003490.02"/>
    <property type="gene ID" value="OsPr106_04g0003490"/>
</dbReference>
<dbReference type="Gramene" id="OsPr106_04g0003490.03">
    <property type="protein sequence ID" value="OsPr106_04g0003490.03"/>
    <property type="gene ID" value="OsPr106_04g0003490"/>
</dbReference>
<dbReference type="HOGENOM" id="CLU_001265_46_14_1"/>
<dbReference type="OMA" id="TAQMGEF"/>
<dbReference type="OrthoDB" id="433512at2759"/>
<dbReference type="ExpressionAtlas" id="Q01MW8">
    <property type="expression patterns" value="differential"/>
</dbReference>
<dbReference type="GO" id="GO:0016020">
    <property type="term" value="C:membrane"/>
    <property type="evidence" value="ECO:0007669"/>
    <property type="project" value="UniProtKB-SubCell"/>
</dbReference>
<dbReference type="GO" id="GO:0005315">
    <property type="term" value="F:phosphate transmembrane transporter activity"/>
    <property type="evidence" value="ECO:0007669"/>
    <property type="project" value="InterPro"/>
</dbReference>
<dbReference type="GO" id="GO:0015293">
    <property type="term" value="F:symporter activity"/>
    <property type="evidence" value="ECO:0007669"/>
    <property type="project" value="UniProtKB-KW"/>
</dbReference>
<dbReference type="GO" id="GO:0006817">
    <property type="term" value="P:phosphate ion transport"/>
    <property type="evidence" value="ECO:0007669"/>
    <property type="project" value="UniProtKB-KW"/>
</dbReference>
<dbReference type="CDD" id="cd17364">
    <property type="entry name" value="MFS_PhT"/>
    <property type="match status" value="1"/>
</dbReference>
<dbReference type="FunFam" id="1.20.1250.20:FF:000175">
    <property type="entry name" value="Inorganic phosphate transporter 1-6"/>
    <property type="match status" value="1"/>
</dbReference>
<dbReference type="Gene3D" id="1.20.1250.20">
    <property type="entry name" value="MFS general substrate transporter like domains"/>
    <property type="match status" value="2"/>
</dbReference>
<dbReference type="InterPro" id="IPR020846">
    <property type="entry name" value="MFS_dom"/>
</dbReference>
<dbReference type="InterPro" id="IPR005828">
    <property type="entry name" value="MFS_sugar_transport-like"/>
</dbReference>
<dbReference type="InterPro" id="IPR036259">
    <property type="entry name" value="MFS_trans_sf"/>
</dbReference>
<dbReference type="InterPro" id="IPR004738">
    <property type="entry name" value="Phos_permease"/>
</dbReference>
<dbReference type="NCBIfam" id="TIGR00887">
    <property type="entry name" value="2A0109"/>
    <property type="match status" value="1"/>
</dbReference>
<dbReference type="PANTHER" id="PTHR24064">
    <property type="entry name" value="SOLUTE CARRIER FAMILY 22 MEMBER"/>
    <property type="match status" value="1"/>
</dbReference>
<dbReference type="Pfam" id="PF00083">
    <property type="entry name" value="Sugar_tr"/>
    <property type="match status" value="1"/>
</dbReference>
<dbReference type="SUPFAM" id="SSF103473">
    <property type="entry name" value="MFS general substrate transporter"/>
    <property type="match status" value="1"/>
</dbReference>
<dbReference type="PROSITE" id="PS50850">
    <property type="entry name" value="MFS"/>
    <property type="match status" value="1"/>
</dbReference>
<reference key="1">
    <citation type="submission" date="2001-09" db="EMBL/GenBank/DDBJ databases">
        <title>Oryza sativa OsPT1 mRNA for phosphate transporter.</title>
        <authorList>
            <person name="Kim D.-H."/>
            <person name="Nam J."/>
            <person name="Jeong S.-J."/>
        </authorList>
    </citation>
    <scope>NUCLEOTIDE SEQUENCE [MRNA]</scope>
    <source>
        <strain>cv. IR36</strain>
        <tissue>Etiolated shoot</tissue>
    </source>
</reference>
<reference key="2">
    <citation type="submission" date="2002-03" db="EMBL/GenBank/DDBJ databases">
        <title>Cloning and characterization of two genes encoding phosphate transporters from rice (Oryza sativa).</title>
        <authorList>
            <person name="Godwin R.M."/>
            <person name="Smith F.W."/>
            <person name="Carroll B.J."/>
        </authorList>
    </citation>
    <scope>NUCLEOTIDE SEQUENCE [GENOMIC DNA / MRNA]</scope>
    <source>
        <strain>cv. IR36</strain>
    </source>
</reference>
<reference key="3">
    <citation type="journal article" date="2002" name="Nature">
        <title>Sequence and analysis of rice chromosome 4.</title>
        <authorList>
            <person name="Feng Q."/>
            <person name="Zhang Y."/>
            <person name="Hao P."/>
            <person name="Wang S."/>
            <person name="Fu G."/>
            <person name="Huang Y."/>
            <person name="Li Y."/>
            <person name="Zhu J."/>
            <person name="Liu Y."/>
            <person name="Hu X."/>
            <person name="Jia P."/>
            <person name="Zhang Y."/>
            <person name="Zhao Q."/>
            <person name="Ying K."/>
            <person name="Yu S."/>
            <person name="Tang Y."/>
            <person name="Weng Q."/>
            <person name="Zhang L."/>
            <person name="Lu Y."/>
            <person name="Mu J."/>
            <person name="Lu Y."/>
            <person name="Zhang L.S."/>
            <person name="Yu Z."/>
            <person name="Fan D."/>
            <person name="Liu X."/>
            <person name="Lu T."/>
            <person name="Li C."/>
            <person name="Wu Y."/>
            <person name="Sun T."/>
            <person name="Lei H."/>
            <person name="Li T."/>
            <person name="Hu H."/>
            <person name="Guan J."/>
            <person name="Wu M."/>
            <person name="Zhang R."/>
            <person name="Zhou B."/>
            <person name="Chen Z."/>
            <person name="Chen L."/>
            <person name="Jin Z."/>
            <person name="Wang R."/>
            <person name="Yin H."/>
            <person name="Cai Z."/>
            <person name="Ren S."/>
            <person name="Lv G."/>
            <person name="Gu W."/>
            <person name="Zhu G."/>
            <person name="Tu Y."/>
            <person name="Jia J."/>
            <person name="Zhang Y."/>
            <person name="Chen J."/>
            <person name="Kang H."/>
            <person name="Chen X."/>
            <person name="Shao C."/>
            <person name="Sun Y."/>
            <person name="Hu Q."/>
            <person name="Zhang X."/>
            <person name="Zhang W."/>
            <person name="Wang L."/>
            <person name="Ding C."/>
            <person name="Sheng H."/>
            <person name="Gu J."/>
            <person name="Chen S."/>
            <person name="Ni L."/>
            <person name="Zhu F."/>
            <person name="Chen W."/>
            <person name="Lan L."/>
            <person name="Lai Y."/>
            <person name="Cheng Z."/>
            <person name="Gu M."/>
            <person name="Jiang J."/>
            <person name="Li J."/>
            <person name="Hong G."/>
            <person name="Xue Y."/>
            <person name="Han B."/>
        </authorList>
    </citation>
    <scope>NUCLEOTIDE SEQUENCE [LARGE SCALE GENOMIC DNA]</scope>
    <source>
        <strain>cv. Guang-Lu-Ai No.4</strain>
    </source>
</reference>
<comment type="function">
    <text evidence="1">High-affinity transporter for external inorganic phosphate.</text>
</comment>
<comment type="subcellular location">
    <subcellularLocation>
        <location evidence="1">Membrane</location>
        <topology evidence="1">Multi-pass membrane protein</topology>
    </subcellularLocation>
</comment>
<comment type="miscellaneous">
    <text>Although related to the sugar transporter family, it does not transport sugars.</text>
</comment>
<comment type="similarity">
    <text evidence="4">Belongs to the major facilitator superfamily. Phosphate:H(+) symporter (TC 2.A.1.9) family.</text>
</comment>
<comment type="sequence caution" evidence="4">
    <conflict type="frameshift">
        <sequence resource="EMBL-CDS" id="AAL11542"/>
    </conflict>
</comment>
<keyword id="KW-0472">Membrane</keyword>
<keyword id="KW-0592">Phosphate transport</keyword>
<keyword id="KW-0769">Symport</keyword>
<keyword id="KW-0812">Transmembrane</keyword>
<keyword id="KW-1133">Transmembrane helix</keyword>
<keyword id="KW-0813">Transport</keyword>
<feature type="chain" id="PRO_0000365484" description="Probable inorganic phosphate transporter 1-4">
    <location>
        <begin position="1"/>
        <end position="538"/>
    </location>
</feature>
<feature type="topological domain" description="Cytoplasmic" evidence="2">
    <location>
        <begin position="1"/>
        <end position="23"/>
    </location>
</feature>
<feature type="transmembrane region" description="Helical" evidence="2">
    <location>
        <begin position="24"/>
        <end position="44"/>
    </location>
</feature>
<feature type="topological domain" description="Extracellular" evidence="2">
    <location>
        <begin position="45"/>
        <end position="69"/>
    </location>
</feature>
<feature type="transmembrane region" description="Helical" evidence="2">
    <location>
        <begin position="70"/>
        <end position="90"/>
    </location>
</feature>
<feature type="topological domain" description="Cytoplasmic" evidence="2">
    <location>
        <begin position="91"/>
        <end position="98"/>
    </location>
</feature>
<feature type="transmembrane region" description="Helical" evidence="2">
    <location>
        <begin position="99"/>
        <end position="119"/>
    </location>
</feature>
<feature type="topological domain" description="Extracellular" evidence="2">
    <location>
        <begin position="120"/>
        <end position="123"/>
    </location>
</feature>
<feature type="transmembrane region" description="Helical" evidence="2">
    <location>
        <begin position="124"/>
        <end position="144"/>
    </location>
</feature>
<feature type="topological domain" description="Cytoplasmic" evidence="2">
    <location>
        <begin position="145"/>
        <end position="163"/>
    </location>
</feature>
<feature type="transmembrane region" description="Helical" evidence="2">
    <location>
        <begin position="164"/>
        <end position="184"/>
    </location>
</feature>
<feature type="topological domain" description="Extracellular" evidence="2">
    <location>
        <begin position="185"/>
        <end position="210"/>
    </location>
</feature>
<feature type="transmembrane region" description="Helical" evidence="2">
    <location>
        <begin position="211"/>
        <end position="231"/>
    </location>
</feature>
<feature type="topological domain" description="Cytoplasmic" evidence="2">
    <location>
        <begin position="232"/>
        <end position="294"/>
    </location>
</feature>
<feature type="transmembrane region" description="Helical" evidence="2">
    <location>
        <begin position="295"/>
        <end position="315"/>
    </location>
</feature>
<feature type="topological domain" description="Extracellular" evidence="2">
    <location>
        <begin position="316"/>
        <end position="346"/>
    </location>
</feature>
<feature type="transmembrane region" description="Helical" evidence="2">
    <location>
        <begin position="347"/>
        <end position="367"/>
    </location>
</feature>
<feature type="topological domain" description="Cytoplasmic" evidence="2">
    <location>
        <begin position="368"/>
        <end position="369"/>
    </location>
</feature>
<feature type="transmembrane region" description="Helical" evidence="2">
    <location>
        <begin position="370"/>
        <end position="390"/>
    </location>
</feature>
<feature type="topological domain" description="Extracellular" evidence="2">
    <location>
        <begin position="391"/>
        <end position="396"/>
    </location>
</feature>
<feature type="transmembrane region" description="Helical" evidence="2">
    <location>
        <begin position="397"/>
        <end position="417"/>
    </location>
</feature>
<feature type="topological domain" description="Cytoplasmic" evidence="2">
    <location>
        <begin position="418"/>
        <end position="440"/>
    </location>
</feature>
<feature type="transmembrane region" description="Helical" evidence="2">
    <location>
        <begin position="441"/>
        <end position="461"/>
    </location>
</feature>
<feature type="topological domain" description="Extracellular" evidence="2">
    <location>
        <begin position="462"/>
        <end position="481"/>
    </location>
</feature>
<feature type="transmembrane region" description="Helical" evidence="2">
    <location>
        <begin position="482"/>
        <end position="502"/>
    </location>
</feature>
<feature type="topological domain" description="Cytoplasmic" evidence="2">
    <location>
        <begin position="503"/>
        <end position="538"/>
    </location>
</feature>
<feature type="region of interest" description="Disordered" evidence="3">
    <location>
        <begin position="507"/>
        <end position="538"/>
    </location>
</feature>
<feature type="compositionally biased region" description="Acidic residues" evidence="3">
    <location>
        <begin position="511"/>
        <end position="522"/>
    </location>
</feature>
<feature type="sequence conflict" description="In Ref. 3; CAH65897." evidence="4" ref="3">
    <location>
        <position position="188"/>
    </location>
</feature>
<feature type="sequence conflict" description="In Ref. 2; AAM14594/AAM14593." evidence="4" ref="2">
    <original>A</original>
    <variation>S</variation>
    <location>
        <position position="191"/>
    </location>
</feature>
<feature type="sequence conflict" description="In Ref. 2; AAM14594/AAM14593." evidence="4" ref="2">
    <original>A</original>
    <variation>T</variation>
    <location>
        <position position="203"/>
    </location>
</feature>
<feature type="sequence conflict" description="In Ref. 1; AAL11542." evidence="4" ref="1">
    <original>F</original>
    <variation>L</variation>
    <location>
        <position position="220"/>
    </location>
</feature>
<feature type="sequence conflict" description="In Ref. 2; AAM14594/AAM14593." evidence="4" ref="2">
    <original>S</original>
    <variation>A</variation>
    <location>
        <position position="526"/>
    </location>
</feature>
<name>PHT14_ORYSI</name>
<accession>Q01MW8</accession>
<accession>Q8RV80</accession>
<accession>Q945E6</accession>
<proteinExistence type="evidence at transcript level"/>
<protein>
    <recommendedName>
        <fullName>Probable inorganic phosphate transporter 1-4</fullName>
        <shortName>OsPT4</shortName>
        <shortName>OsPht1;4</shortName>
    </recommendedName>
    <alternativeName>
        <fullName>H(+)/Pi cotransporter</fullName>
    </alternativeName>
    <alternativeName>
        <fullName>OsPT1</fullName>
    </alternativeName>
</protein>
<sequence length="538" mass="58796">MAGELKVLNALDSAKTQWYHFTAIVIAGMGFFTDAYDLFSISLVTKLLGRIYYFNPASKSPGSLPPNVSAAVNGVAFCGTLAGQLFFGWLGDKMGRKKVYGMTLMLMVICCLASGLSFGSSAKGVMATLCFFRFWLGFGIGGDYPLSATIMSEYANKRTRGAFIAAVFAMQGFGNLTGGIVAIIVSAAFKARFDAPAYRDDRAGSTVPQADYAWRIVLMFGAIPALLTYYWRMKMPETARYTALVAKNAKQAAADMTQVLNVEIVEEQEKADEVARREQFGLFSRQFLRRHGRHLLGTTVCWFVLDIAFYSSNLFQKDIYTAVQWLPKADTMSALEEMFKISRAQTLVALCGTIPGYWFTVFFIDIIGRFVIQLGGFFFMTAFMLGLAVPYHHWTTPGNHIGFVVMYAFTFFFANFGPNSTTFIVPAEIFPARLRSTCHGISAAAGKAGAIVGSFGFLYAAQSTDASKTDAGYPPGIGVRNSLFFLAGCNVIGFFFTFLVPESKGKSLEELSGENEDDDDVPEAPSTADHRTAPAPPA</sequence>
<organism>
    <name type="scientific">Oryza sativa subsp. indica</name>
    <name type="common">Rice</name>
    <dbReference type="NCBI Taxonomy" id="39946"/>
    <lineage>
        <taxon>Eukaryota</taxon>
        <taxon>Viridiplantae</taxon>
        <taxon>Streptophyta</taxon>
        <taxon>Embryophyta</taxon>
        <taxon>Tracheophyta</taxon>
        <taxon>Spermatophyta</taxon>
        <taxon>Magnoliopsida</taxon>
        <taxon>Liliopsida</taxon>
        <taxon>Poales</taxon>
        <taxon>Poaceae</taxon>
        <taxon>BOP clade</taxon>
        <taxon>Oryzoideae</taxon>
        <taxon>Oryzeae</taxon>
        <taxon>Oryzinae</taxon>
        <taxon>Oryza</taxon>
        <taxon>Oryza sativa</taxon>
    </lineage>
</organism>
<gene>
    <name type="primary">PHT1-4</name>
    <name type="synonym">PHT1-2</name>
    <name type="synonym">PT1</name>
    <name type="synonym">PT4</name>
    <name type="ORF">OSIGBa0132G14.5</name>
</gene>
<evidence type="ECO:0000250" key="1"/>
<evidence type="ECO:0000255" key="2"/>
<evidence type="ECO:0000256" key="3">
    <source>
        <dbReference type="SAM" id="MobiDB-lite"/>
    </source>
</evidence>
<evidence type="ECO:0000305" key="4"/>